<protein>
    <recommendedName>
        <fullName evidence="3">2,3-bisphosphoglycerate-independent phosphoglycerate mutase</fullName>
        <shortName evidence="3">BPG-independent PGAM</shortName>
        <shortName evidence="3">Phosphoglyceromutase</shortName>
        <shortName evidence="3">iPGM</shortName>
        <ecNumber evidence="2">5.4.2.12</ecNumber>
    </recommendedName>
</protein>
<keyword id="KW-0324">Glycolysis</keyword>
<keyword id="KW-0413">Isomerase</keyword>
<keyword id="KW-0464">Manganese</keyword>
<keyword id="KW-0479">Metal-binding</keyword>
<keyword id="KW-1185">Reference proteome</keyword>
<gene>
    <name evidence="1" type="primary">gpmI</name>
    <name type="synonym">pgmI</name>
    <name type="synonym">yibO</name>
    <name type="ordered locus">b3612</name>
    <name type="ordered locus">JW3587</name>
</gene>
<reference key="1">
    <citation type="journal article" date="1994" name="Nucleic Acids Res.">
        <title>Analysis of the Escherichia coli genome. V. DNA sequence of the region from 76.0 to 81.5 minutes.</title>
        <authorList>
            <person name="Sofia H.J."/>
            <person name="Burland V."/>
            <person name="Daniels D.L."/>
            <person name="Plunkett G. III"/>
            <person name="Blattner F.R."/>
        </authorList>
    </citation>
    <scope>NUCLEOTIDE SEQUENCE [LARGE SCALE GENOMIC DNA]</scope>
    <source>
        <strain>K12 / MG1655 / ATCC 47076</strain>
    </source>
</reference>
<reference key="2">
    <citation type="journal article" date="1997" name="Science">
        <title>The complete genome sequence of Escherichia coli K-12.</title>
        <authorList>
            <person name="Blattner F.R."/>
            <person name="Plunkett G. III"/>
            <person name="Bloch C.A."/>
            <person name="Perna N.T."/>
            <person name="Burland V."/>
            <person name="Riley M."/>
            <person name="Collado-Vides J."/>
            <person name="Glasner J.D."/>
            <person name="Rode C.K."/>
            <person name="Mayhew G.F."/>
            <person name="Gregor J."/>
            <person name="Davis N.W."/>
            <person name="Kirkpatrick H.A."/>
            <person name="Goeden M.A."/>
            <person name="Rose D.J."/>
            <person name="Mau B."/>
            <person name="Shao Y."/>
        </authorList>
    </citation>
    <scope>NUCLEOTIDE SEQUENCE [LARGE SCALE GENOMIC DNA]</scope>
    <source>
        <strain>K12 / MG1655 / ATCC 47076</strain>
    </source>
</reference>
<reference key="3">
    <citation type="journal article" date="2006" name="Mol. Syst. Biol.">
        <title>Highly accurate genome sequences of Escherichia coli K-12 strains MG1655 and W3110.</title>
        <authorList>
            <person name="Hayashi K."/>
            <person name="Morooka N."/>
            <person name="Yamamoto Y."/>
            <person name="Fujita K."/>
            <person name="Isono K."/>
            <person name="Choi S."/>
            <person name="Ohtsubo E."/>
            <person name="Baba T."/>
            <person name="Wanner B.L."/>
            <person name="Mori H."/>
            <person name="Horiuchi T."/>
        </authorList>
    </citation>
    <scope>NUCLEOTIDE SEQUENCE [LARGE SCALE GENOMIC DNA]</scope>
    <source>
        <strain>K12 / W3110 / ATCC 27325 / DSM 5911</strain>
    </source>
</reference>
<reference key="4">
    <citation type="journal article" date="1999" name="Electrophoresis">
        <title>Enrichment of low abundance proteins of Escherichia coli by hydroxyapatite chromatography.</title>
        <authorList>
            <person name="Fountoulakis M."/>
            <person name="Takacs M.-F."/>
            <person name="Berndt P."/>
            <person name="Langen H."/>
            <person name="Takacs B."/>
        </authorList>
    </citation>
    <scope>IDENTIFICATION BY MASS SPECTROMETRY</scope>
    <source>
        <strain>B / BL21</strain>
    </source>
</reference>
<reference key="5">
    <citation type="journal article" date="1999" name="FEBS Lett.">
        <title>The two analogous phosphoglycerate mutases of Escherichia coli.</title>
        <authorList>
            <person name="Fraser H.I."/>
            <person name="Kvaratskhelia M."/>
            <person name="White M.F."/>
        </authorList>
    </citation>
    <scope>FUNCTION</scope>
    <scope>CATALYTIC ACTIVITY</scope>
    <scope>BIOPHYSICOCHEMICAL PROPERTIES</scope>
    <scope>COFACTOR</scope>
    <scope>ACTIVITY REGULATION</scope>
    <scope>DEVELOPMENTAL STAGE</scope>
    <scope>SUBUNIT</scope>
</reference>
<proteinExistence type="evidence at protein level"/>
<sequence length="514" mass="56194">MLVSKKPMVLVILDGYGYREEQQDNAIFSAKTPVMDALWANRPHTLIDASGLEVGLPDRQMGNSEVGHVNLGAGRIVYQDLTRLDVEIKDRAFFANPVLTGAVDKAKNAGKAVHIMGLLSAGGVHSHEDHIMAMVELAAERGAEKIYLHAFLDGRDTPPRSAESSLKKFEEKFAALGKGRVASIIGRYYAMDRDNRWDRVEKAYDLLTLAQGEFQADTAVAGLQAAYARDENDEFVKATVIRAEGQPDAAMEDGDALIFMNFRADRAREITRAFVNADFDGFARKKVVNVDFVMLTEYAADIKTAVAYPPASLVNTFGEWMAKNDKTQLRISETEKYAHVTFFFNGGVEESFKGEDRILINSPKVATYDLQPEMSSAELTEKLVAAIKSGKYDTIICNYPNGDMVGHTGVMEAAVKAVEALDHCVEEVAKAVESVGGQLLITADHGNAEQMRDPATGQAHTAHTNLPVPLIYVGDKNVKAVEGGKLSDIAPTMLSLMGMEIPQEMTGKPLFIVE</sequence>
<organism>
    <name type="scientific">Escherichia coli (strain K12)</name>
    <dbReference type="NCBI Taxonomy" id="83333"/>
    <lineage>
        <taxon>Bacteria</taxon>
        <taxon>Pseudomonadati</taxon>
        <taxon>Pseudomonadota</taxon>
        <taxon>Gammaproteobacteria</taxon>
        <taxon>Enterobacterales</taxon>
        <taxon>Enterobacteriaceae</taxon>
        <taxon>Escherichia</taxon>
    </lineage>
</organism>
<dbReference type="EC" id="5.4.2.12" evidence="2"/>
<dbReference type="EMBL" id="U00039">
    <property type="protein sequence ID" value="AAB18589.1"/>
    <property type="molecule type" value="Genomic_DNA"/>
</dbReference>
<dbReference type="EMBL" id="U00096">
    <property type="protein sequence ID" value="AAC76636.1"/>
    <property type="molecule type" value="Genomic_DNA"/>
</dbReference>
<dbReference type="EMBL" id="AP009048">
    <property type="protein sequence ID" value="BAE77680.1"/>
    <property type="molecule type" value="Genomic_DNA"/>
</dbReference>
<dbReference type="PIR" id="S47833">
    <property type="entry name" value="S47833"/>
</dbReference>
<dbReference type="RefSeq" id="NP_418069.1">
    <property type="nucleotide sequence ID" value="NC_000913.3"/>
</dbReference>
<dbReference type="RefSeq" id="WP_001350558.1">
    <property type="nucleotide sequence ID" value="NZ_LN832404.1"/>
</dbReference>
<dbReference type="SMR" id="P37689"/>
<dbReference type="BioGRID" id="4263294">
    <property type="interactions" value="23"/>
</dbReference>
<dbReference type="DIP" id="DIP-12425N"/>
<dbReference type="FunCoup" id="P37689">
    <property type="interactions" value="654"/>
</dbReference>
<dbReference type="IntAct" id="P37689">
    <property type="interactions" value="6"/>
</dbReference>
<dbReference type="STRING" id="511145.b3612"/>
<dbReference type="jPOST" id="P37689"/>
<dbReference type="PaxDb" id="511145-b3612"/>
<dbReference type="EnsemblBacteria" id="AAC76636">
    <property type="protein sequence ID" value="AAC76636"/>
    <property type="gene ID" value="b3612"/>
</dbReference>
<dbReference type="GeneID" id="948130"/>
<dbReference type="KEGG" id="ecj:JW3587"/>
<dbReference type="KEGG" id="eco:b3612"/>
<dbReference type="KEGG" id="ecoc:C3026_19585"/>
<dbReference type="PATRIC" id="fig|1411691.4.peg.3094"/>
<dbReference type="EchoBASE" id="EB2204"/>
<dbReference type="eggNOG" id="COG0696">
    <property type="taxonomic scope" value="Bacteria"/>
</dbReference>
<dbReference type="HOGENOM" id="CLU_026099_2_0_6"/>
<dbReference type="InParanoid" id="P37689"/>
<dbReference type="OMA" id="FMDGRDT"/>
<dbReference type="OrthoDB" id="9800863at2"/>
<dbReference type="PhylomeDB" id="P37689"/>
<dbReference type="BioCyc" id="EcoCyc:PGMI-MONOMER"/>
<dbReference type="BioCyc" id="MetaCyc:PGMI-MONOMER"/>
<dbReference type="SABIO-RK" id="P37689"/>
<dbReference type="UniPathway" id="UPA00109">
    <property type="reaction ID" value="UER00186"/>
</dbReference>
<dbReference type="PRO" id="PR:P37689"/>
<dbReference type="Proteomes" id="UP000000625">
    <property type="component" value="Chromosome"/>
</dbReference>
<dbReference type="GO" id="GO:0005737">
    <property type="term" value="C:cytoplasm"/>
    <property type="evidence" value="ECO:0007005"/>
    <property type="project" value="UniProtKB"/>
</dbReference>
<dbReference type="GO" id="GO:0005829">
    <property type="term" value="C:cytosol"/>
    <property type="evidence" value="ECO:0000314"/>
    <property type="project" value="EcoCyc"/>
</dbReference>
<dbReference type="GO" id="GO:0030145">
    <property type="term" value="F:manganese ion binding"/>
    <property type="evidence" value="ECO:0000314"/>
    <property type="project" value="EcoCyc"/>
</dbReference>
<dbReference type="GO" id="GO:0004619">
    <property type="term" value="F:phosphoglycerate mutase activity"/>
    <property type="evidence" value="ECO:0000318"/>
    <property type="project" value="GO_Central"/>
</dbReference>
<dbReference type="GO" id="GO:0005975">
    <property type="term" value="P:carbohydrate metabolic process"/>
    <property type="evidence" value="ECO:0000318"/>
    <property type="project" value="GO_Central"/>
</dbReference>
<dbReference type="GO" id="GO:0006007">
    <property type="term" value="P:glucose catabolic process"/>
    <property type="evidence" value="ECO:0007669"/>
    <property type="project" value="InterPro"/>
</dbReference>
<dbReference type="GO" id="GO:0006096">
    <property type="term" value="P:glycolytic process"/>
    <property type="evidence" value="ECO:0007669"/>
    <property type="project" value="UniProtKB-UniRule"/>
</dbReference>
<dbReference type="GO" id="GO:0006979">
    <property type="term" value="P:response to oxidative stress"/>
    <property type="evidence" value="ECO:0000315"/>
    <property type="project" value="EcoCyc"/>
</dbReference>
<dbReference type="CDD" id="cd16010">
    <property type="entry name" value="iPGM"/>
    <property type="match status" value="1"/>
</dbReference>
<dbReference type="FunFam" id="3.40.1450.10:FF:000001">
    <property type="entry name" value="2,3-bisphosphoglycerate-independent phosphoglycerate mutase"/>
    <property type="match status" value="1"/>
</dbReference>
<dbReference type="FunFam" id="3.40.720.10:FF:000001">
    <property type="entry name" value="2,3-bisphosphoglycerate-independent phosphoglycerate mutase"/>
    <property type="match status" value="1"/>
</dbReference>
<dbReference type="Gene3D" id="3.40.720.10">
    <property type="entry name" value="Alkaline Phosphatase, subunit A"/>
    <property type="match status" value="1"/>
</dbReference>
<dbReference type="Gene3D" id="3.40.1450.10">
    <property type="entry name" value="BPG-independent phosphoglycerate mutase, domain B"/>
    <property type="match status" value="1"/>
</dbReference>
<dbReference type="HAMAP" id="MF_01038">
    <property type="entry name" value="GpmI"/>
    <property type="match status" value="1"/>
</dbReference>
<dbReference type="InterPro" id="IPR017850">
    <property type="entry name" value="Alkaline_phosphatase_core_sf"/>
</dbReference>
<dbReference type="InterPro" id="IPR011258">
    <property type="entry name" value="BPG-indep_PGM_N"/>
</dbReference>
<dbReference type="InterPro" id="IPR006124">
    <property type="entry name" value="Metalloenzyme"/>
</dbReference>
<dbReference type="InterPro" id="IPR036646">
    <property type="entry name" value="PGAM_B_sf"/>
</dbReference>
<dbReference type="InterPro" id="IPR005995">
    <property type="entry name" value="Pgm_bpd_ind"/>
</dbReference>
<dbReference type="NCBIfam" id="TIGR01307">
    <property type="entry name" value="pgm_bpd_ind"/>
    <property type="match status" value="1"/>
</dbReference>
<dbReference type="NCBIfam" id="NF003897">
    <property type="entry name" value="PRK05434.1-5"/>
    <property type="match status" value="1"/>
</dbReference>
<dbReference type="PANTHER" id="PTHR31637">
    <property type="entry name" value="2,3-BISPHOSPHOGLYCERATE-INDEPENDENT PHOSPHOGLYCERATE MUTASE"/>
    <property type="match status" value="1"/>
</dbReference>
<dbReference type="PANTHER" id="PTHR31637:SF0">
    <property type="entry name" value="2,3-BISPHOSPHOGLYCERATE-INDEPENDENT PHOSPHOGLYCERATE MUTASE"/>
    <property type="match status" value="1"/>
</dbReference>
<dbReference type="Pfam" id="PF06415">
    <property type="entry name" value="iPGM_N"/>
    <property type="match status" value="1"/>
</dbReference>
<dbReference type="Pfam" id="PF01676">
    <property type="entry name" value="Metalloenzyme"/>
    <property type="match status" value="1"/>
</dbReference>
<dbReference type="PIRSF" id="PIRSF001492">
    <property type="entry name" value="IPGAM"/>
    <property type="match status" value="1"/>
</dbReference>
<dbReference type="SUPFAM" id="SSF64158">
    <property type="entry name" value="2,3-Bisphosphoglycerate-independent phosphoglycerate mutase, substrate-binding domain"/>
    <property type="match status" value="1"/>
</dbReference>
<dbReference type="SUPFAM" id="SSF53649">
    <property type="entry name" value="Alkaline phosphatase-like"/>
    <property type="match status" value="1"/>
</dbReference>
<comment type="function">
    <text evidence="2">Catalyzes the interconversion of 2-phosphoglycerate (2-PGA) and 3-phosphoglycerate (3-PGA).</text>
</comment>
<comment type="catalytic activity">
    <reaction evidence="2">
        <text>(2R)-2-phosphoglycerate = (2R)-3-phosphoglycerate</text>
        <dbReference type="Rhea" id="RHEA:15901"/>
        <dbReference type="ChEBI" id="CHEBI:58272"/>
        <dbReference type="ChEBI" id="CHEBI:58289"/>
        <dbReference type="EC" id="5.4.2.12"/>
    </reaction>
</comment>
<comment type="cofactor">
    <cofactor evidence="2">
        <name>Mn(2+)</name>
        <dbReference type="ChEBI" id="CHEBI:29035"/>
    </cofactor>
    <text evidence="2">Binds 2 manganese ions per subunit.</text>
</comment>
<comment type="activity regulation">
    <text evidence="2">Insensitive to vanadate.</text>
</comment>
<comment type="biophysicochemical properties">
    <kinetics>
        <KM evidence="2">210 uM for 3-PGA (at pH 7 and 30 degrees Celsius)</KM>
        <KM evidence="2">97 uM for 2-PGA (at pH 7 and 30 degrees Celsius)</KM>
        <text evidence="2">kcat is 22 sec(-1) for mutase with 3-PGA as substrate (at pH 7 and 30 degrees Celsius). kcat is 10 sec(-1) for mutase with 2-PGA as substrate (at pH 7 and 30 degrees Celsius).</text>
    </kinetics>
</comment>
<comment type="pathway">
    <text evidence="4">Carbohydrate degradation; glycolysis; pyruvate from D-glyceraldehyde 3-phosphate: step 3/5.</text>
</comment>
<comment type="subunit">
    <text evidence="2">Monomer.</text>
</comment>
<comment type="developmental stage">
    <text evidence="2">Expressed most strongly in early exponential growth, with levels falling off as cells reached late log phase and stationary phase.</text>
</comment>
<comment type="miscellaneous">
    <text evidence="2">Inhibition by vanadate is a diagnostic test for discrimination between the cofactor-dependent (GpmA) and -independent (GpmI) phosphoglycerate mutases.</text>
</comment>
<comment type="similarity">
    <text evidence="4">Belongs to the BPG-independent phosphoglycerate mutase family.</text>
</comment>
<accession>P37689</accession>
<accession>Q2M7S6</accession>
<evidence type="ECO:0000255" key="1">
    <source>
        <dbReference type="HAMAP-Rule" id="MF_01038"/>
    </source>
</evidence>
<evidence type="ECO:0000269" key="2">
    <source>
    </source>
</evidence>
<evidence type="ECO:0000303" key="3">
    <source>
    </source>
</evidence>
<evidence type="ECO:0000305" key="4"/>
<name>GPMI_ECOLI</name>
<feature type="chain" id="PRO_0000212145" description="2,3-bisphosphoglycerate-independent phosphoglycerate mutase">
    <location>
        <begin position="1"/>
        <end position="514"/>
    </location>
</feature>
<feature type="active site" description="Phosphoserine intermediate" evidence="1">
    <location>
        <position position="64"/>
    </location>
</feature>
<feature type="binding site" evidence="1">
    <location>
        <position position="14"/>
    </location>
    <ligand>
        <name>Mn(2+)</name>
        <dbReference type="ChEBI" id="CHEBI:29035"/>
        <label>2</label>
    </ligand>
</feature>
<feature type="binding site" evidence="1">
    <location>
        <position position="64"/>
    </location>
    <ligand>
        <name>Mn(2+)</name>
        <dbReference type="ChEBI" id="CHEBI:29035"/>
        <label>2</label>
    </ligand>
</feature>
<feature type="binding site" evidence="1">
    <location>
        <position position="125"/>
    </location>
    <ligand>
        <name>substrate</name>
    </ligand>
</feature>
<feature type="binding site" evidence="1">
    <location>
        <begin position="155"/>
        <end position="156"/>
    </location>
    <ligand>
        <name>substrate</name>
    </ligand>
</feature>
<feature type="binding site" evidence="1">
    <location>
        <position position="187"/>
    </location>
    <ligand>
        <name>substrate</name>
    </ligand>
</feature>
<feature type="binding site" evidence="1">
    <location>
        <position position="193"/>
    </location>
    <ligand>
        <name>substrate</name>
    </ligand>
</feature>
<feature type="binding site" evidence="1">
    <location>
        <begin position="263"/>
        <end position="266"/>
    </location>
    <ligand>
        <name>substrate</name>
    </ligand>
</feature>
<feature type="binding site" evidence="1">
    <location>
        <position position="336"/>
    </location>
    <ligand>
        <name>substrate</name>
    </ligand>
</feature>
<feature type="binding site" evidence="1">
    <location>
        <position position="403"/>
    </location>
    <ligand>
        <name>Mn(2+)</name>
        <dbReference type="ChEBI" id="CHEBI:29035"/>
        <label>1</label>
    </ligand>
</feature>
<feature type="binding site" evidence="1">
    <location>
        <position position="407"/>
    </location>
    <ligand>
        <name>Mn(2+)</name>
        <dbReference type="ChEBI" id="CHEBI:29035"/>
        <label>1</label>
    </ligand>
</feature>
<feature type="binding site" evidence="1">
    <location>
        <position position="444"/>
    </location>
    <ligand>
        <name>Mn(2+)</name>
        <dbReference type="ChEBI" id="CHEBI:29035"/>
        <label>2</label>
    </ligand>
</feature>
<feature type="binding site" evidence="1">
    <location>
        <position position="445"/>
    </location>
    <ligand>
        <name>Mn(2+)</name>
        <dbReference type="ChEBI" id="CHEBI:29035"/>
        <label>2</label>
    </ligand>
</feature>
<feature type="binding site" evidence="1">
    <location>
        <position position="463"/>
    </location>
    <ligand>
        <name>Mn(2+)</name>
        <dbReference type="ChEBI" id="CHEBI:29035"/>
        <label>1</label>
    </ligand>
</feature>